<accession>F4I8U3</accession>
<feature type="chain" id="PRO_0000412844" description="Putative B3 domain-containing protein At1g05615">
    <location>
        <begin position="1"/>
        <end position="172"/>
    </location>
</feature>
<feature type="DNA-binding region" description="TF-B3">
    <location>
        <begin position="69"/>
        <end position="169"/>
    </location>
</feature>
<comment type="subcellular location">
    <subcellularLocation>
        <location evidence="1">Nucleus</location>
    </subcellularLocation>
</comment>
<reference key="1">
    <citation type="journal article" date="2000" name="Nature">
        <title>Sequence and analysis of chromosome 1 of the plant Arabidopsis thaliana.</title>
        <authorList>
            <person name="Theologis A."/>
            <person name="Ecker J.R."/>
            <person name="Palm C.J."/>
            <person name="Federspiel N.A."/>
            <person name="Kaul S."/>
            <person name="White O."/>
            <person name="Alonso J."/>
            <person name="Altafi H."/>
            <person name="Araujo R."/>
            <person name="Bowman C.L."/>
            <person name="Brooks S.Y."/>
            <person name="Buehler E."/>
            <person name="Chan A."/>
            <person name="Chao Q."/>
            <person name="Chen H."/>
            <person name="Cheuk R.F."/>
            <person name="Chin C.W."/>
            <person name="Chung M.K."/>
            <person name="Conn L."/>
            <person name="Conway A.B."/>
            <person name="Conway A.R."/>
            <person name="Creasy T.H."/>
            <person name="Dewar K."/>
            <person name="Dunn P."/>
            <person name="Etgu P."/>
            <person name="Feldblyum T.V."/>
            <person name="Feng J.-D."/>
            <person name="Fong B."/>
            <person name="Fujii C.Y."/>
            <person name="Gill J.E."/>
            <person name="Goldsmith A.D."/>
            <person name="Haas B."/>
            <person name="Hansen N.F."/>
            <person name="Hughes B."/>
            <person name="Huizar L."/>
            <person name="Hunter J.L."/>
            <person name="Jenkins J."/>
            <person name="Johnson-Hopson C."/>
            <person name="Khan S."/>
            <person name="Khaykin E."/>
            <person name="Kim C.J."/>
            <person name="Koo H.L."/>
            <person name="Kremenetskaia I."/>
            <person name="Kurtz D.B."/>
            <person name="Kwan A."/>
            <person name="Lam B."/>
            <person name="Langin-Hooper S."/>
            <person name="Lee A."/>
            <person name="Lee J.M."/>
            <person name="Lenz C.A."/>
            <person name="Li J.H."/>
            <person name="Li Y.-P."/>
            <person name="Lin X."/>
            <person name="Liu S.X."/>
            <person name="Liu Z.A."/>
            <person name="Luros J.S."/>
            <person name="Maiti R."/>
            <person name="Marziali A."/>
            <person name="Militscher J."/>
            <person name="Miranda M."/>
            <person name="Nguyen M."/>
            <person name="Nierman W.C."/>
            <person name="Osborne B.I."/>
            <person name="Pai G."/>
            <person name="Peterson J."/>
            <person name="Pham P.K."/>
            <person name="Rizzo M."/>
            <person name="Rooney T."/>
            <person name="Rowley D."/>
            <person name="Sakano H."/>
            <person name="Salzberg S.L."/>
            <person name="Schwartz J.R."/>
            <person name="Shinn P."/>
            <person name="Southwick A.M."/>
            <person name="Sun H."/>
            <person name="Tallon L.J."/>
            <person name="Tambunga G."/>
            <person name="Toriumi M.J."/>
            <person name="Town C.D."/>
            <person name="Utterback T."/>
            <person name="Van Aken S."/>
            <person name="Vaysberg M."/>
            <person name="Vysotskaia V.S."/>
            <person name="Walker M."/>
            <person name="Wu D."/>
            <person name="Yu G."/>
            <person name="Fraser C.M."/>
            <person name="Venter J.C."/>
            <person name="Davis R.W."/>
        </authorList>
    </citation>
    <scope>NUCLEOTIDE SEQUENCE [LARGE SCALE GENOMIC DNA]</scope>
    <source>
        <strain>cv. Columbia</strain>
    </source>
</reference>
<reference key="2">
    <citation type="journal article" date="2017" name="Plant J.">
        <title>Araport11: a complete reannotation of the Arabidopsis thaliana reference genome.</title>
        <authorList>
            <person name="Cheng C.Y."/>
            <person name="Krishnakumar V."/>
            <person name="Chan A.P."/>
            <person name="Thibaud-Nissen F."/>
            <person name="Schobel S."/>
            <person name="Town C.D."/>
        </authorList>
    </citation>
    <scope>GENOME REANNOTATION</scope>
    <source>
        <strain>cv. Columbia</strain>
    </source>
</reference>
<reference key="3">
    <citation type="journal article" date="2008" name="Trends Plant Sci.">
        <title>The plant B3 superfamily.</title>
        <authorList>
            <person name="Swaminathan K."/>
            <person name="Peterson K."/>
            <person name="Jack T."/>
        </authorList>
    </citation>
    <scope>GENE FAMILY</scope>
</reference>
<proteinExistence type="inferred from homology"/>
<organism>
    <name type="scientific">Arabidopsis thaliana</name>
    <name type="common">Mouse-ear cress</name>
    <dbReference type="NCBI Taxonomy" id="3702"/>
    <lineage>
        <taxon>Eukaryota</taxon>
        <taxon>Viridiplantae</taxon>
        <taxon>Streptophyta</taxon>
        <taxon>Embryophyta</taxon>
        <taxon>Tracheophyta</taxon>
        <taxon>Spermatophyta</taxon>
        <taxon>Magnoliopsida</taxon>
        <taxon>eudicotyledons</taxon>
        <taxon>Gunneridae</taxon>
        <taxon>Pentapetalae</taxon>
        <taxon>rosids</taxon>
        <taxon>malvids</taxon>
        <taxon>Brassicales</taxon>
        <taxon>Brassicaceae</taxon>
        <taxon>Camelineae</taxon>
        <taxon>Arabidopsis</taxon>
    </lineage>
</organism>
<evidence type="ECO:0000250" key="1"/>
<name>Y1056_ARATH</name>
<sequence length="172" mass="19775">MGAIHDEPFTACGDETECFGGNREGSQSFHSSSTKEENLEDSYLYLVHQRSMSIFFWDERANTGVAGAVDEGKIIDFEFLNPDEKRIIEEHANKEREEGVDVILVNFDRREYMLNLRRWNMGTSPLYILVSGRYNVVKGCRLKEGNEIRIWSFHFDDQLNLAMVPLTPTESG</sequence>
<keyword id="KW-0238">DNA-binding</keyword>
<keyword id="KW-0539">Nucleus</keyword>
<keyword id="KW-1185">Reference proteome</keyword>
<keyword id="KW-0804">Transcription</keyword>
<keyword id="KW-0805">Transcription regulation</keyword>
<gene>
    <name type="ordered locus">At1g05615</name>
    <name type="ORF">F3F20</name>
</gene>
<dbReference type="EMBL" id="AC007153">
    <property type="status" value="NOT_ANNOTATED_CDS"/>
    <property type="molecule type" value="Genomic_DNA"/>
</dbReference>
<dbReference type="EMBL" id="CP002684">
    <property type="protein sequence ID" value="AEE27865.1"/>
    <property type="molecule type" value="Genomic_DNA"/>
</dbReference>
<dbReference type="RefSeq" id="NP_683278.1">
    <property type="nucleotide sequence ID" value="NM_148437.1"/>
</dbReference>
<dbReference type="STRING" id="3702.F4I8U3"/>
<dbReference type="PaxDb" id="3702-AT1G05615.1"/>
<dbReference type="EnsemblPlants" id="AT1G05615.1">
    <property type="protein sequence ID" value="AT1G05615.1"/>
    <property type="gene ID" value="AT1G05615"/>
</dbReference>
<dbReference type="GeneID" id="837067"/>
<dbReference type="Gramene" id="AT1G05615.1">
    <property type="protein sequence ID" value="AT1G05615.1"/>
    <property type="gene ID" value="AT1G05615"/>
</dbReference>
<dbReference type="KEGG" id="ath:AT1G05615"/>
<dbReference type="Araport" id="AT1G05615"/>
<dbReference type="TAIR" id="AT1G05615"/>
<dbReference type="HOGENOM" id="CLU_1557391_0_0_1"/>
<dbReference type="InParanoid" id="F4I8U3"/>
<dbReference type="OMA" id="CGDETEC"/>
<dbReference type="PhylomeDB" id="F4I8U3"/>
<dbReference type="PRO" id="PR:F4I8U3"/>
<dbReference type="Proteomes" id="UP000006548">
    <property type="component" value="Chromosome 1"/>
</dbReference>
<dbReference type="GO" id="GO:0005634">
    <property type="term" value="C:nucleus"/>
    <property type="evidence" value="ECO:0007669"/>
    <property type="project" value="UniProtKB-SubCell"/>
</dbReference>
<dbReference type="GO" id="GO:0003677">
    <property type="term" value="F:DNA binding"/>
    <property type="evidence" value="ECO:0007669"/>
    <property type="project" value="UniProtKB-KW"/>
</dbReference>
<dbReference type="Gene3D" id="2.40.330.10">
    <property type="entry name" value="DNA-binding pseudobarrel domain"/>
    <property type="match status" value="1"/>
</dbReference>
<dbReference type="InterPro" id="IPR005508">
    <property type="entry name" value="At2g31720-like"/>
</dbReference>
<dbReference type="InterPro" id="IPR015300">
    <property type="entry name" value="DNA-bd_pseudobarrel_sf"/>
</dbReference>
<dbReference type="PANTHER" id="PTHR31541">
    <property type="entry name" value="B3 DOMAIN PLANT PROTEIN-RELATED"/>
    <property type="match status" value="1"/>
</dbReference>
<dbReference type="PANTHER" id="PTHR31541:SF61">
    <property type="entry name" value="TF-B3 DOMAIN-CONTAINING PROTEIN"/>
    <property type="match status" value="1"/>
</dbReference>
<dbReference type="Pfam" id="PF03754">
    <property type="entry name" value="At2g31720-like"/>
    <property type="match status" value="1"/>
</dbReference>
<protein>
    <recommendedName>
        <fullName>Putative B3 domain-containing protein At1g05615</fullName>
    </recommendedName>
</protein>